<organism>
    <name type="scientific">Serratia marcescens</name>
    <dbReference type="NCBI Taxonomy" id="615"/>
    <lineage>
        <taxon>Bacteria</taxon>
        <taxon>Pseudomonadati</taxon>
        <taxon>Pseudomonadota</taxon>
        <taxon>Gammaproteobacteria</taxon>
        <taxon>Enterobacterales</taxon>
        <taxon>Yersiniaceae</taxon>
        <taxon>Serratia</taxon>
    </lineage>
</organism>
<sequence>MRVEVTIDKTRPLPAGAIEALTGELGKRVNRQFPDAVVHVRYAGANGLSVLGGAKTDRDLIEEILQETWESADEWFSAE</sequence>
<feature type="chain" id="PRO_0000201638" description="DNA damage-inducible protein I">
    <location>
        <begin position="1"/>
        <end position="79"/>
    </location>
</feature>
<dbReference type="EMBL" id="AF175466">
    <property type="protein sequence ID" value="AAD50308.1"/>
    <property type="molecule type" value="Genomic_DNA"/>
</dbReference>
<dbReference type="RefSeq" id="WP_015377444.1">
    <property type="nucleotide sequence ID" value="NZ_WNKC01000001.1"/>
</dbReference>
<dbReference type="SMR" id="Q9S3S0"/>
<dbReference type="STRING" id="273526.SMDB11_1153"/>
<dbReference type="OrthoDB" id="6590090at2"/>
<dbReference type="GO" id="GO:0006281">
    <property type="term" value="P:DNA repair"/>
    <property type="evidence" value="ECO:0007669"/>
    <property type="project" value="UniProtKB-KW"/>
</dbReference>
<dbReference type="GO" id="GO:0009432">
    <property type="term" value="P:SOS response"/>
    <property type="evidence" value="ECO:0007669"/>
    <property type="project" value="UniProtKB-KW"/>
</dbReference>
<dbReference type="Gene3D" id="3.30.910.10">
    <property type="entry name" value="DinI-like"/>
    <property type="match status" value="1"/>
</dbReference>
<dbReference type="InterPro" id="IPR036687">
    <property type="entry name" value="DinI-like_sf"/>
</dbReference>
<dbReference type="InterPro" id="IPR010391">
    <property type="entry name" value="DNA_damage-inducible_DinI-like"/>
</dbReference>
<dbReference type="NCBIfam" id="NF007893">
    <property type="entry name" value="PRK10597.1"/>
    <property type="match status" value="1"/>
</dbReference>
<dbReference type="PANTHER" id="PTHR36572:SF2">
    <property type="entry name" value="DNA DAMAGE-INDUCIBLE PROTEIN I"/>
    <property type="match status" value="1"/>
</dbReference>
<dbReference type="PANTHER" id="PTHR36572">
    <property type="entry name" value="DNA DAMAGE-INDUCIBLE PROTEIN I-RELATED"/>
    <property type="match status" value="1"/>
</dbReference>
<dbReference type="Pfam" id="PF06183">
    <property type="entry name" value="DinI"/>
    <property type="match status" value="1"/>
</dbReference>
<dbReference type="SUPFAM" id="SSF54857">
    <property type="entry name" value="DNA damage-inducible protein DinI"/>
    <property type="match status" value="1"/>
</dbReference>
<protein>
    <recommendedName>
        <fullName>DNA damage-inducible protein I</fullName>
    </recommendedName>
</protein>
<accession>Q9S3S0</accession>
<name>DINI_SERMA</name>
<gene>
    <name type="primary">dinI</name>
</gene>
<proteinExistence type="inferred from homology"/>
<reference key="1">
    <citation type="journal article" date="2002" name="Curr. Microbiol.">
        <title>Multi-copy repression of Serratia marcescens nuclease expression by dinI.</title>
        <authorList>
            <person name="Berkmen M."/>
            <person name="Benedik M.J."/>
        </authorList>
    </citation>
    <scope>NUCLEOTIDE SEQUENCE [GENOMIC DNA]</scope>
    <source>
        <strain>SM6</strain>
    </source>
</reference>
<keyword id="KW-0227">DNA damage</keyword>
<keyword id="KW-0234">DNA repair</keyword>
<keyword id="KW-0742">SOS response</keyword>
<evidence type="ECO:0000305" key="1"/>
<comment type="function">
    <text>Involved in SOS regulation. Inhibits RecA by preventing RecA to bind ssDNA. Can displace ssDNA from RecA. Inhibits NucA transcription.</text>
</comment>
<comment type="similarity">
    <text evidence="1">Belongs to the DinI family.</text>
</comment>